<dbReference type="EC" id="3.2.1.25" evidence="7"/>
<dbReference type="EMBL" id="U17432">
    <property type="protein sequence ID" value="AAC48460.1"/>
    <property type="molecule type" value="mRNA"/>
</dbReference>
<dbReference type="PIR" id="A55881">
    <property type="entry name" value="A55881"/>
</dbReference>
<dbReference type="RefSeq" id="NP_776812.1">
    <property type="nucleotide sequence ID" value="NM_174387.2"/>
</dbReference>
<dbReference type="SMR" id="Q29444"/>
<dbReference type="FunCoup" id="Q29444">
    <property type="interactions" value="1742"/>
</dbReference>
<dbReference type="STRING" id="9913.ENSBTAP00000026334"/>
<dbReference type="CAZy" id="GH2">
    <property type="family name" value="Glycoside Hydrolase Family 2"/>
</dbReference>
<dbReference type="GlyCosmos" id="Q29444">
    <property type="glycosylation" value="6 sites, No reported glycans"/>
</dbReference>
<dbReference type="GlyGen" id="Q29444">
    <property type="glycosylation" value="6 sites"/>
</dbReference>
<dbReference type="PaxDb" id="9913-ENSBTAP00000026334"/>
<dbReference type="GeneID" id="281909"/>
<dbReference type="KEGG" id="bta:281909"/>
<dbReference type="CTD" id="4126"/>
<dbReference type="eggNOG" id="KOG2230">
    <property type="taxonomic scope" value="Eukaryota"/>
</dbReference>
<dbReference type="InParanoid" id="Q29444"/>
<dbReference type="OrthoDB" id="2866996at2759"/>
<dbReference type="UniPathway" id="UPA00280"/>
<dbReference type="Proteomes" id="UP000009136">
    <property type="component" value="Unplaced"/>
</dbReference>
<dbReference type="GO" id="GO:0005764">
    <property type="term" value="C:lysosome"/>
    <property type="evidence" value="ECO:0007669"/>
    <property type="project" value="UniProtKB-SubCell"/>
</dbReference>
<dbReference type="GO" id="GO:0004567">
    <property type="term" value="F:beta-mannosidase activity"/>
    <property type="evidence" value="ECO:0000250"/>
    <property type="project" value="UniProtKB"/>
</dbReference>
<dbReference type="GO" id="GO:0005975">
    <property type="term" value="P:carbohydrate metabolic process"/>
    <property type="evidence" value="ECO:0007669"/>
    <property type="project" value="InterPro"/>
</dbReference>
<dbReference type="GO" id="GO:0006516">
    <property type="term" value="P:glycoprotein catabolic process"/>
    <property type="evidence" value="ECO:0000250"/>
    <property type="project" value="UniProtKB"/>
</dbReference>
<dbReference type="FunFam" id="2.60.40.10:FF:000650">
    <property type="entry name" value="Mannosidase beta"/>
    <property type="match status" value="1"/>
</dbReference>
<dbReference type="FunFam" id="2.60.40.10:FF:000781">
    <property type="entry name" value="Mannosidase beta"/>
    <property type="match status" value="1"/>
</dbReference>
<dbReference type="FunFam" id="3.20.20.80:FF:000035">
    <property type="entry name" value="Mannosidase beta"/>
    <property type="match status" value="1"/>
</dbReference>
<dbReference type="FunFam" id="2.60.120.260:FF:000060">
    <property type="entry name" value="Probable beta-mannosidase"/>
    <property type="match status" value="1"/>
</dbReference>
<dbReference type="Gene3D" id="2.60.120.260">
    <property type="entry name" value="Galactose-binding domain-like"/>
    <property type="match status" value="1"/>
</dbReference>
<dbReference type="Gene3D" id="3.20.20.80">
    <property type="entry name" value="Glycosidases"/>
    <property type="match status" value="1"/>
</dbReference>
<dbReference type="Gene3D" id="2.60.40.10">
    <property type="entry name" value="Immunoglobulins"/>
    <property type="match status" value="2"/>
</dbReference>
<dbReference type="InterPro" id="IPR036156">
    <property type="entry name" value="Beta-gal/glucu_dom_sf"/>
</dbReference>
<dbReference type="InterPro" id="IPR054593">
    <property type="entry name" value="Beta-mannosidase-like_N2"/>
</dbReference>
<dbReference type="InterPro" id="IPR050887">
    <property type="entry name" value="Beta-mannosidase_GH2"/>
</dbReference>
<dbReference type="InterPro" id="IPR041625">
    <property type="entry name" value="Beta-mannosidase_Ig"/>
</dbReference>
<dbReference type="InterPro" id="IPR008979">
    <property type="entry name" value="Galactose-bd-like_sf"/>
</dbReference>
<dbReference type="InterPro" id="IPR006103">
    <property type="entry name" value="Glyco_hydro_2_cat"/>
</dbReference>
<dbReference type="InterPro" id="IPR017853">
    <property type="entry name" value="Glycoside_hydrolase_SF"/>
</dbReference>
<dbReference type="InterPro" id="IPR013783">
    <property type="entry name" value="Ig-like_fold"/>
</dbReference>
<dbReference type="InterPro" id="IPR041447">
    <property type="entry name" value="Mannosidase_ig"/>
</dbReference>
<dbReference type="PANTHER" id="PTHR43730">
    <property type="entry name" value="BETA-MANNOSIDASE"/>
    <property type="match status" value="1"/>
</dbReference>
<dbReference type="PANTHER" id="PTHR43730:SF1">
    <property type="entry name" value="BETA-MANNOSIDASE"/>
    <property type="match status" value="1"/>
</dbReference>
<dbReference type="Pfam" id="PF02836">
    <property type="entry name" value="Glyco_hydro_2_C"/>
    <property type="match status" value="1"/>
</dbReference>
<dbReference type="Pfam" id="PF22666">
    <property type="entry name" value="Glyco_hydro_2_N2"/>
    <property type="match status" value="1"/>
</dbReference>
<dbReference type="Pfam" id="PF17753">
    <property type="entry name" value="Ig_mannosidase"/>
    <property type="match status" value="1"/>
</dbReference>
<dbReference type="Pfam" id="PF17786">
    <property type="entry name" value="Mannosidase_ig"/>
    <property type="match status" value="1"/>
</dbReference>
<dbReference type="SUPFAM" id="SSF51445">
    <property type="entry name" value="(Trans)glycosidases"/>
    <property type="match status" value="1"/>
</dbReference>
<dbReference type="SUPFAM" id="SSF49303">
    <property type="entry name" value="beta-Galactosidase/glucuronidase domain"/>
    <property type="match status" value="3"/>
</dbReference>
<dbReference type="SUPFAM" id="SSF49785">
    <property type="entry name" value="Galactose-binding domain-like"/>
    <property type="match status" value="1"/>
</dbReference>
<keyword id="KW-0903">Direct protein sequencing</keyword>
<keyword id="KW-1015">Disulfide bond</keyword>
<keyword id="KW-0325">Glycoprotein</keyword>
<keyword id="KW-0326">Glycosidase</keyword>
<keyword id="KW-0378">Hydrolase</keyword>
<keyword id="KW-0458">Lysosome</keyword>
<keyword id="KW-1185">Reference proteome</keyword>
<keyword id="KW-0732">Signal</keyword>
<accession>Q29444</accession>
<feature type="signal peptide" evidence="3">
    <location>
        <begin position="1"/>
        <end position="17"/>
    </location>
</feature>
<feature type="chain" id="PRO_0000012164" description="Beta-mannosidase">
    <location>
        <begin position="18"/>
        <end position="879"/>
    </location>
</feature>
<feature type="active site" description="Proton donor" evidence="1">
    <location>
        <position position="457"/>
    </location>
</feature>
<feature type="active site" description="Nucleophile" evidence="1">
    <location>
        <position position="554"/>
    </location>
</feature>
<feature type="binding site" evidence="1">
    <location>
        <begin position="190"/>
        <end position="192"/>
    </location>
    <ligand>
        <name>substrate</name>
    </ligand>
</feature>
<feature type="binding site" evidence="1">
    <location>
        <position position="456"/>
    </location>
    <ligand>
        <name>substrate</name>
    </ligand>
</feature>
<feature type="glycosylation site" description="N-linked (GlcNAc...) asparagine" evidence="3">
    <location>
        <position position="35"/>
    </location>
</feature>
<feature type="glycosylation site" description="N-linked (GlcNAc...) asparagine" evidence="3">
    <location>
        <position position="77"/>
    </location>
</feature>
<feature type="glycosylation site" description="N-linked (GlcNAc...) asparagine" evidence="3">
    <location>
        <position position="297"/>
    </location>
</feature>
<feature type="glycosylation site" description="N-linked (GlcNAc...) asparagine" evidence="3">
    <location>
        <position position="302"/>
    </location>
</feature>
<feature type="glycosylation site" description="N-linked (GlcNAc...) asparagine" evidence="3">
    <location>
        <position position="607"/>
    </location>
</feature>
<feature type="glycosylation site" description="N-linked (GlcNAc...) asparagine" evidence="3">
    <location>
        <position position="803"/>
    </location>
</feature>
<feature type="disulfide bond" evidence="1">
    <location>
        <begin position="167"/>
        <end position="176"/>
    </location>
</feature>
<feature type="disulfide bond" evidence="1">
    <location>
        <begin position="540"/>
        <end position="629"/>
    </location>
</feature>
<feature type="disulfide bond" evidence="1">
    <location>
        <begin position="732"/>
        <end position="761"/>
    </location>
</feature>
<feature type="disulfide bond" evidence="1">
    <location>
        <begin position="764"/>
        <end position="769"/>
    </location>
</feature>
<feature type="sequence variant">
    <original>F</original>
    <variation>R</variation>
    <location>
        <position position="65"/>
    </location>
</feature>
<feature type="sequence variant">
    <original>H</original>
    <variation>D</variation>
    <location>
        <position position="709"/>
    </location>
</feature>
<name>MANBA_BOVIN</name>
<comment type="function">
    <text evidence="7">Exoglycosidase that cleaves the single beta-linked mannose residue from the non-reducing end of all N-linked glycoprotein oligosaccharides.</text>
</comment>
<comment type="catalytic activity">
    <reaction evidence="7">
        <text>Hydrolysis of terminal, non-reducing beta-D-mannose residues in beta-D-mannosides.</text>
        <dbReference type="EC" id="3.2.1.25"/>
    </reaction>
</comment>
<comment type="pathway">
    <text evidence="7">Glycan metabolism; N-glycan degradation.</text>
</comment>
<comment type="subunit">
    <text evidence="1">Monomer.</text>
</comment>
<comment type="subcellular location">
    <subcellularLocation>
        <location evidence="2">Lysosome</location>
    </subcellularLocation>
</comment>
<comment type="tissue specificity">
    <text evidence="4 5">Detected in kidney (at protein level) (PubMed:8424779). Highest expression is found in thyroid tissue. The amount of transcript is significantly higher in normal tissues than in tissues affected by the disease (PubMed:7876128).</text>
</comment>
<comment type="PTM">
    <text>The N-terminus is blocked.</text>
</comment>
<comment type="PTM">
    <text evidence="5">N-glycosylated.</text>
</comment>
<comment type="disease">
    <text evidence="4 5">Defects in MANBA cause beta-mannosidosis, a severe disorder that affects peripheral and central nervous system myelin resulting in tremor, nystagmus, ataxia and early death. The primary storage products associated with the enzyme deficiency are the trisaccharide Man-beta-1-4-GlcNAc-beta-1-4-GlcNAc and the disaccharide Man-beta-1-4-GlcNAc.</text>
</comment>
<comment type="similarity">
    <text evidence="6">Belongs to the glycosyl hydrolase 2 family.</text>
</comment>
<gene>
    <name type="primary">MANBA</name>
</gene>
<proteinExistence type="evidence at protein level"/>
<sequence length="879" mass="101176">MLLRLLLLLAPCGAGFATKVVSISLRGNWKIHSGNGSLQLPATVPGCVHSALFNKRIIKDPYYRFNNLDYRWIALDNWTYIKKFKLHSDMSTWSKVNLVFEGIDTVAVVLLNSVPIGKTDNMFRRYSFDITHTVKAVNIIEVRFQSPVVYANQRSERHTAYWVPPNCPPPVQDGECHVNFIRKMQCSFGWDWGPSFPTQGIWKDVRIEAYNVCHLNYFMFTPIYDNYMKTWNLKIESSFDVVSSKLVSGEAIVAIPELNIQQTNNIELQHGERTVELFVKIDKAIIVETWWPHGHGNQTGYNMSVIFELDGGLRFEKSAKVYFRTVELVEEPIQNSPGLSFYFKINGLPIFLKGSNWIPADSFQDRVTSAMLRLLLQSVVDANMNALRVWGGGVYEQDEFYELCDELGIMIWQDFMFACALYPTDKDFMDSVREEVTHQVRRLKSHPSIITWSGNNENEAALMMGWYDTKPGYLQTYIKDYVTLYVKNIRTIVLEGDQTRPFITSSPTNGAKTIAEGWLSPNPYDLNYGDVHFYDYVSDCWNWRTFPKARFVSEYGYQSWPSFSTLEKVSSEEDWSYRSSFALHRQHLINGNNEMLHQIELHFKLPNSTDQLRRFKDTLYLTQVMQAQCVKTETEFYRRSRSEIVNGKGHTMGALYWQLNDIWQAPSWSSLEYGGKWKMLHYFARHFFAPLLPVGFEDKDMLFIYGASHLHSDQQMMLTVRVHTWSSLELVCSESTNPFVIKAGESVLLYTKPVPELLKGCPGCTRQSCVVSFYLSTDGELLSPINYHFLSSLKNAKGLHKANITATISQQGDTFVFDLKTSAVAPFVWLDVGSIPGRFSDNGFLMTEKTRTVFFYPWKPTSKSELEQSFHVTSLADTY</sequence>
<organism>
    <name type="scientific">Bos taurus</name>
    <name type="common">Bovine</name>
    <dbReference type="NCBI Taxonomy" id="9913"/>
    <lineage>
        <taxon>Eukaryota</taxon>
        <taxon>Metazoa</taxon>
        <taxon>Chordata</taxon>
        <taxon>Craniata</taxon>
        <taxon>Vertebrata</taxon>
        <taxon>Euteleostomi</taxon>
        <taxon>Mammalia</taxon>
        <taxon>Eutheria</taxon>
        <taxon>Laurasiatheria</taxon>
        <taxon>Artiodactyla</taxon>
        <taxon>Ruminantia</taxon>
        <taxon>Pecora</taxon>
        <taxon>Bovidae</taxon>
        <taxon>Bovinae</taxon>
        <taxon>Bos</taxon>
    </lineage>
</organism>
<evidence type="ECO:0000250" key="1">
    <source>
        <dbReference type="UniProtKB" id="Q8K2I4"/>
    </source>
</evidence>
<evidence type="ECO:0000250" key="2">
    <source>
        <dbReference type="UniProtKB" id="Q95327"/>
    </source>
</evidence>
<evidence type="ECO:0000255" key="3"/>
<evidence type="ECO:0000269" key="4">
    <source>
    </source>
</evidence>
<evidence type="ECO:0000269" key="5">
    <source>
    </source>
</evidence>
<evidence type="ECO:0000305" key="6"/>
<evidence type="ECO:0000305" key="7">
    <source>
    </source>
</evidence>
<protein>
    <recommendedName>
        <fullName>Beta-mannosidase</fullName>
        <ecNumber evidence="7">3.2.1.25</ecNumber>
    </recommendedName>
    <alternativeName>
        <fullName>Lysosomal beta A mannosidase</fullName>
    </alternativeName>
    <alternativeName>
        <fullName>Mannanase</fullName>
        <shortName>Mannase</shortName>
    </alternativeName>
</protein>
<reference key="1">
    <citation type="journal article" date="1995" name="J. Biol. Chem.">
        <title>Molecular cloning and characterization of bovine beta-mannosidase.</title>
        <authorList>
            <person name="Chen H."/>
            <person name="Leipprandt J.R."/>
            <person name="Traviss C.E."/>
            <person name="Sopher B.L."/>
            <person name="Jones M.Z."/>
            <person name="Cavanagh K.T."/>
            <person name="Friderici K.H."/>
        </authorList>
    </citation>
    <scope>NUCLEOTIDE SEQUENCE [MRNA]</scope>
    <scope>PROTEIN SEQUENCE OF 57-65; 220-228; 417-429; 617-624; 680-716; 852-861 AND 864-879</scope>
    <scope>DISEASE</scope>
    <scope>TISSUE SPECIFICITY</scope>
    <source>
        <tissue>Kidney</tissue>
        <tissue>Thyroid</tissue>
    </source>
</reference>
<reference key="2">
    <citation type="journal article" date="1993" name="Biochem. J.">
        <title>Bovine kidney beta-mannosidase: purification and characterization.</title>
        <authorList>
            <person name="Sopher B.L."/>
            <person name="Traviss C.E."/>
            <person name="Cavanagh K.T."/>
            <person name="Jones M.Z."/>
            <person name="Friderici K.H."/>
        </authorList>
    </citation>
    <scope>FUNCTION</scope>
    <scope>CATALYTIC ACTIVITY</scope>
    <scope>PATHWAY</scope>
    <scope>DISEASE</scope>
    <scope>GLYCOSYLATION</scope>
    <scope>TISSUE SPECIFICITY</scope>
</reference>